<sequence length="437" mass="49163">MDLSSSPNHPITVVSTFASPFEGPPSVGDSNSSARKPISLWPGMYHSPVTNALWEARCKIFERLLDPPKDAPPQSELLTKTPSQSRTTILYNFSTDYILREQYRDPWNEVRIGKLLEDLDALAGTISVKHCSDDDSTTRPLLLVTASVDKIVLKKPISVDIDLKIVGAVIWVGRSSIEIQLEVSQSTKEGSNAADDVALSANFIFVARDSKTAKAAPVNRLSPETEQEKLLFDEAEARSSMRKRKRGDQERREFENGEANRLQTLLAEGRIFCDMPALADRDSILLRDTRQENSLICQPQQRNIHGRIFGGFLLHRAFELAFSTAYAFAGLVPYFLEIDHVDFXRPVDVGDFLRLKSCVLYTELHNPDQPLINIEVVAHVTRPELRSSEVSNTFYFTFTVRPEAKATKNGYRIRNVVPATEEEARRILERMDAEACI</sequence>
<name>TE2_HUMLU</name>
<comment type="function">
    <text evidence="2">Acyl-CoA thioesterases are a group of enzymes that catalyze the hydrolysis of acyl-CoAs to the free fatty acid and coenzyme A (CoASH), providing the potential to regulate intracellular levels of acyl-CoAs, free fatty acids and CoASH.</text>
</comment>
<comment type="subcellular location">
    <subcellularLocation>
        <location evidence="3">Plastid</location>
        <location evidence="3">Chloroplast</location>
    </subcellularLocation>
</comment>
<comment type="tissue specificity">
    <text evidence="5">Mostly expressed at low levels in glandular trichomes (lupulin glands), and, to a lower extent, in stems, leaves, flowers and cones.</text>
</comment>
<comment type="similarity">
    <text evidence="7">Belongs to the acyl coenzyme A hydrolase family.</text>
</comment>
<proteinExistence type="evidence at transcript level"/>
<organism>
    <name type="scientific">Humulus lupulus</name>
    <name type="common">European hop</name>
    <dbReference type="NCBI Taxonomy" id="3486"/>
    <lineage>
        <taxon>Eukaryota</taxon>
        <taxon>Viridiplantae</taxon>
        <taxon>Streptophyta</taxon>
        <taxon>Embryophyta</taxon>
        <taxon>Tracheophyta</taxon>
        <taxon>Spermatophyta</taxon>
        <taxon>Magnoliopsida</taxon>
        <taxon>eudicotyledons</taxon>
        <taxon>Gunneridae</taxon>
        <taxon>Pentapetalae</taxon>
        <taxon>rosids</taxon>
        <taxon>fabids</taxon>
        <taxon>Rosales</taxon>
        <taxon>Cannabaceae</taxon>
        <taxon>Humulus</taxon>
    </lineage>
</organism>
<accession>S4TDL2</accession>
<protein>
    <recommendedName>
        <fullName evidence="6">Acyl-coenzyme A thioesterase 2, chloroplastic</fullName>
        <shortName evidence="6">Acyl-CoA thioesterase 2</shortName>
        <shortName evidence="6">HlTE2</shortName>
        <ecNumber evidence="1">3.1.2.-</ecNumber>
    </recommendedName>
    <alternativeName>
        <fullName evidence="6">Acyl-CoA thioester hydrolase 2</fullName>
    </alternativeName>
</protein>
<reference key="1">
    <citation type="journal article" date="2013" name="Mol. Plant">
        <title>Characterization of the formation of branched short-chain fatty acid:CoAs for bitter acid biosynthesis in hop glandular trichomes.</title>
        <authorList>
            <person name="Xu H."/>
            <person name="Zhang F."/>
            <person name="Liu B."/>
            <person name="Huhman D.V."/>
            <person name="Sumner L.W."/>
            <person name="Dixon R.A."/>
            <person name="Wang G."/>
        </authorList>
    </citation>
    <scope>NUCLEOTIDE SEQUENCE [MRNA]</scope>
    <scope>TISSUE SPECIFICITY</scope>
    <scope>GENE FAMILY</scope>
    <scope>NOMENCLATURE</scope>
    <source>
        <strain>cv. Nugget</strain>
    </source>
</reference>
<gene>
    <name evidence="6" type="primary">TE2</name>
</gene>
<evidence type="ECO:0000250" key="1">
    <source>
        <dbReference type="UniProtKB" id="Q32MW3"/>
    </source>
</evidence>
<evidence type="ECO:0000250" key="2">
    <source>
        <dbReference type="UniProtKB" id="S4TF94"/>
    </source>
</evidence>
<evidence type="ECO:0000255" key="3"/>
<evidence type="ECO:0000255" key="4">
    <source>
        <dbReference type="PROSITE-ProRule" id="PRU01106"/>
    </source>
</evidence>
<evidence type="ECO:0000269" key="5">
    <source>
    </source>
</evidence>
<evidence type="ECO:0000303" key="6">
    <source>
    </source>
</evidence>
<evidence type="ECO:0000305" key="7"/>
<dbReference type="EC" id="3.1.2.-" evidence="1"/>
<dbReference type="EMBL" id="JX878392">
    <property type="protein sequence ID" value="AGA17932.1"/>
    <property type="molecule type" value="mRNA"/>
</dbReference>
<dbReference type="GO" id="GO:0009507">
    <property type="term" value="C:chloroplast"/>
    <property type="evidence" value="ECO:0007669"/>
    <property type="project" value="UniProtKB-SubCell"/>
</dbReference>
<dbReference type="GO" id="GO:0047617">
    <property type="term" value="F:fatty acyl-CoA hydrolase activity"/>
    <property type="evidence" value="ECO:0007669"/>
    <property type="project" value="TreeGrafter"/>
</dbReference>
<dbReference type="GO" id="GO:0006637">
    <property type="term" value="P:acyl-CoA metabolic process"/>
    <property type="evidence" value="ECO:0007669"/>
    <property type="project" value="TreeGrafter"/>
</dbReference>
<dbReference type="CDD" id="cd03442">
    <property type="entry name" value="BFIT_BACH"/>
    <property type="match status" value="2"/>
</dbReference>
<dbReference type="FunFam" id="3.10.129.10:FF:000023">
    <property type="entry name" value="Acyl-coenzyme A thioesterase 9, mitochondrial"/>
    <property type="match status" value="1"/>
</dbReference>
<dbReference type="FunFam" id="3.10.129.10:FF:000031">
    <property type="entry name" value="Acyl-coenzyme A thioesterase 9, mitochondrial"/>
    <property type="match status" value="1"/>
</dbReference>
<dbReference type="Gene3D" id="3.10.129.10">
    <property type="entry name" value="Hotdog Thioesterase"/>
    <property type="match status" value="2"/>
</dbReference>
<dbReference type="InterPro" id="IPR033120">
    <property type="entry name" value="HOTDOG_ACOT"/>
</dbReference>
<dbReference type="InterPro" id="IPR029069">
    <property type="entry name" value="HotDog_dom_sf"/>
</dbReference>
<dbReference type="PANTHER" id="PTHR12655">
    <property type="entry name" value="ACYL-COA THIOESTERASE"/>
    <property type="match status" value="1"/>
</dbReference>
<dbReference type="PANTHER" id="PTHR12655:SF0">
    <property type="entry name" value="ACYL-COENZYME A THIOESTERASE 9, MITOCHONDRIAL"/>
    <property type="match status" value="1"/>
</dbReference>
<dbReference type="SUPFAM" id="SSF54637">
    <property type="entry name" value="Thioesterase/thiol ester dehydrase-isomerase"/>
    <property type="match status" value="2"/>
</dbReference>
<dbReference type="PROSITE" id="PS51770">
    <property type="entry name" value="HOTDOG_ACOT"/>
    <property type="match status" value="2"/>
</dbReference>
<feature type="transit peptide" description="Chloroplast" evidence="3">
    <location>
        <begin position="1"/>
        <end position="13"/>
    </location>
</feature>
<feature type="chain" id="PRO_0000452961" description="Acyl-coenzyme A thioesterase 2, chloroplastic" evidence="3">
    <location>
        <begin position="14"/>
        <end position="437"/>
    </location>
</feature>
<feature type="domain" description="HotDog ACOT-type 1" evidence="4">
    <location>
        <begin position="89"/>
        <end position="211"/>
    </location>
</feature>
<feature type="domain" description="HotDog ACOT-type 2" evidence="4">
    <location>
        <begin position="287"/>
        <end position="404"/>
    </location>
</feature>
<keyword id="KW-0150">Chloroplast</keyword>
<keyword id="KW-0378">Hydrolase</keyword>
<keyword id="KW-0934">Plastid</keyword>
<keyword id="KW-0677">Repeat</keyword>
<keyword id="KW-0809">Transit peptide</keyword>